<comment type="similarity">
    <text evidence="1">Belongs to the eukaryotic ribosomal protein eS4 family.</text>
</comment>
<evidence type="ECO:0000305" key="1"/>
<accession>Q95V34</accession>
<proteinExistence type="evidence at transcript level"/>
<gene>
    <name type="primary">RpS4</name>
</gene>
<reference key="1">
    <citation type="journal article" date="2003" name="Bioinformatics">
        <title>Annotation pattern of ESTs from Spodoptera frugiperda Sf9 cells and analysis of the ribosomal protein genes reveal insect-specific features and unexpectedly low codon usage bias.</title>
        <authorList>
            <person name="Landais I."/>
            <person name="Ogliastro M."/>
            <person name="Mita K."/>
            <person name="Nohata J."/>
            <person name="Lopez-Ferber M."/>
            <person name="Duonor-Cerutti M."/>
            <person name="Shimada T."/>
            <person name="Fournier P."/>
            <person name="Devauchelle G."/>
        </authorList>
    </citation>
    <scope>NUCLEOTIDE SEQUENCE [LARGE SCALE MRNA]</scope>
</reference>
<feature type="chain" id="PRO_0000260290" description="Small ribosomal subunit protein eS4">
    <location>
        <begin position="1"/>
        <end position="263"/>
    </location>
</feature>
<feature type="domain" description="S4 RNA-binding">
    <location>
        <begin position="42"/>
        <end position="104"/>
    </location>
</feature>
<sequence>MARGPKKHLKRLNAPKAWMLDKLGGVYAPRPSTGPHKLRECLPLVIFLRNRLKYALTGNEVLKIVKQRLIKVDGKVRTDPTYPAGFMDVVSIEKTNELFRLIYDVKGRFTVHRITPEEAKYKLCKVKRVSTGPKNVPFLVTHDGRTIRYPDPLIKVNDSVQLDIATSKIMDFIKFESGNLCMITGGRNLGRVGTIVSRERHPGSFDIVHIKDSTGHTFATRLNNVFIIGKGTKAYISLPRGKGVRLTIAEERDKRIAAKVAGQ</sequence>
<name>RS4_SPOFR</name>
<organism>
    <name type="scientific">Spodoptera frugiperda</name>
    <name type="common">Fall armyworm</name>
    <dbReference type="NCBI Taxonomy" id="7108"/>
    <lineage>
        <taxon>Eukaryota</taxon>
        <taxon>Metazoa</taxon>
        <taxon>Ecdysozoa</taxon>
        <taxon>Arthropoda</taxon>
        <taxon>Hexapoda</taxon>
        <taxon>Insecta</taxon>
        <taxon>Pterygota</taxon>
        <taxon>Neoptera</taxon>
        <taxon>Endopterygota</taxon>
        <taxon>Lepidoptera</taxon>
        <taxon>Glossata</taxon>
        <taxon>Ditrysia</taxon>
        <taxon>Noctuoidea</taxon>
        <taxon>Noctuidae</taxon>
        <taxon>Amphipyrinae</taxon>
        <taxon>Spodoptera</taxon>
    </lineage>
</organism>
<keyword id="KW-0687">Ribonucleoprotein</keyword>
<keyword id="KW-0689">Ribosomal protein</keyword>
<keyword id="KW-0694">RNA-binding</keyword>
<keyword id="KW-0699">rRNA-binding</keyword>
<protein>
    <recommendedName>
        <fullName evidence="1">Small ribosomal subunit protein eS4</fullName>
    </recommendedName>
    <alternativeName>
        <fullName>40S ribosomal protein S4</fullName>
    </alternativeName>
</protein>
<dbReference type="EMBL" id="AF429978">
    <property type="protein sequence ID" value="AAL26580.1"/>
    <property type="molecule type" value="mRNA"/>
</dbReference>
<dbReference type="SMR" id="Q95V34"/>
<dbReference type="EnsemblMetazoa" id="XM_035602139.2">
    <property type="protein sequence ID" value="XP_035458032.1"/>
    <property type="gene ID" value="LOC118281555"/>
</dbReference>
<dbReference type="EnsemblMetazoa" id="XM_035602140.2">
    <property type="protein sequence ID" value="XP_035458033.1"/>
    <property type="gene ID" value="LOC118281555"/>
</dbReference>
<dbReference type="OrthoDB" id="1109245at2759"/>
<dbReference type="Proteomes" id="UP000829999">
    <property type="component" value="Unplaced"/>
</dbReference>
<dbReference type="GO" id="GO:0022627">
    <property type="term" value="C:cytosolic small ribosomal subunit"/>
    <property type="evidence" value="ECO:0007669"/>
    <property type="project" value="TreeGrafter"/>
</dbReference>
<dbReference type="GO" id="GO:0019843">
    <property type="term" value="F:rRNA binding"/>
    <property type="evidence" value="ECO:0007669"/>
    <property type="project" value="UniProtKB-KW"/>
</dbReference>
<dbReference type="GO" id="GO:0003735">
    <property type="term" value="F:structural constituent of ribosome"/>
    <property type="evidence" value="ECO:0007669"/>
    <property type="project" value="InterPro"/>
</dbReference>
<dbReference type="GO" id="GO:0006412">
    <property type="term" value="P:translation"/>
    <property type="evidence" value="ECO:0007669"/>
    <property type="project" value="InterPro"/>
</dbReference>
<dbReference type="CDD" id="cd06087">
    <property type="entry name" value="KOW_RPS4"/>
    <property type="match status" value="1"/>
</dbReference>
<dbReference type="CDD" id="cd00165">
    <property type="entry name" value="S4"/>
    <property type="match status" value="1"/>
</dbReference>
<dbReference type="FunFam" id="2.30.30.30:FF:000005">
    <property type="entry name" value="40S ribosomal protein S4"/>
    <property type="match status" value="1"/>
</dbReference>
<dbReference type="FunFam" id="2.40.50.740:FF:000001">
    <property type="entry name" value="40S ribosomal protein S4"/>
    <property type="match status" value="1"/>
</dbReference>
<dbReference type="FunFam" id="3.10.290.10:FF:000051">
    <property type="entry name" value="40S ribosomal protein S4, X isoform"/>
    <property type="match status" value="1"/>
</dbReference>
<dbReference type="Gene3D" id="2.30.30.30">
    <property type="match status" value="1"/>
</dbReference>
<dbReference type="Gene3D" id="2.40.50.740">
    <property type="match status" value="1"/>
</dbReference>
<dbReference type="Gene3D" id="3.10.290.10">
    <property type="entry name" value="RNA-binding S4 domain"/>
    <property type="match status" value="1"/>
</dbReference>
<dbReference type="HAMAP" id="MF_00485">
    <property type="entry name" value="Ribosomal_eS4"/>
    <property type="match status" value="1"/>
</dbReference>
<dbReference type="InterPro" id="IPR005824">
    <property type="entry name" value="KOW"/>
</dbReference>
<dbReference type="InterPro" id="IPR014722">
    <property type="entry name" value="Rib_uL2_dom2"/>
</dbReference>
<dbReference type="InterPro" id="IPR000876">
    <property type="entry name" value="Ribosomal_eS4"/>
</dbReference>
<dbReference type="InterPro" id="IPR032277">
    <property type="entry name" value="Ribosomal_eS4_C"/>
</dbReference>
<dbReference type="InterPro" id="IPR013845">
    <property type="entry name" value="Ribosomal_eS4_central_region"/>
</dbReference>
<dbReference type="InterPro" id="IPR038237">
    <property type="entry name" value="Ribosomal_eS4_central_sf"/>
</dbReference>
<dbReference type="InterPro" id="IPR041982">
    <property type="entry name" value="Ribosomal_eS4_KOW"/>
</dbReference>
<dbReference type="InterPro" id="IPR013843">
    <property type="entry name" value="Ribosomal_eS4_N"/>
</dbReference>
<dbReference type="InterPro" id="IPR018199">
    <property type="entry name" value="Ribosomal_eS4_N_CS"/>
</dbReference>
<dbReference type="InterPro" id="IPR002942">
    <property type="entry name" value="S4_RNA-bd"/>
</dbReference>
<dbReference type="InterPro" id="IPR036986">
    <property type="entry name" value="S4_RNA-bd_sf"/>
</dbReference>
<dbReference type="PANTHER" id="PTHR11581">
    <property type="entry name" value="30S/40S RIBOSOMAL PROTEIN S4"/>
    <property type="match status" value="1"/>
</dbReference>
<dbReference type="PANTHER" id="PTHR11581:SF0">
    <property type="entry name" value="SMALL RIBOSOMAL SUBUNIT PROTEIN ES4"/>
    <property type="match status" value="1"/>
</dbReference>
<dbReference type="Pfam" id="PF16121">
    <property type="entry name" value="40S_S4_C"/>
    <property type="match status" value="1"/>
</dbReference>
<dbReference type="Pfam" id="PF00467">
    <property type="entry name" value="KOW"/>
    <property type="match status" value="1"/>
</dbReference>
<dbReference type="Pfam" id="PF00900">
    <property type="entry name" value="Ribosomal_S4e"/>
    <property type="match status" value="1"/>
</dbReference>
<dbReference type="Pfam" id="PF08071">
    <property type="entry name" value="RS4NT"/>
    <property type="match status" value="1"/>
</dbReference>
<dbReference type="Pfam" id="PF01479">
    <property type="entry name" value="S4"/>
    <property type="match status" value="1"/>
</dbReference>
<dbReference type="PIRSF" id="PIRSF002116">
    <property type="entry name" value="Ribosomal_S4"/>
    <property type="match status" value="1"/>
</dbReference>
<dbReference type="SMART" id="SM00739">
    <property type="entry name" value="KOW"/>
    <property type="match status" value="1"/>
</dbReference>
<dbReference type="SMART" id="SM00363">
    <property type="entry name" value="S4"/>
    <property type="match status" value="1"/>
</dbReference>
<dbReference type="SUPFAM" id="SSF55174">
    <property type="entry name" value="Alpha-L RNA-binding motif"/>
    <property type="match status" value="1"/>
</dbReference>
<dbReference type="PROSITE" id="PS00528">
    <property type="entry name" value="RIBOSOMAL_S4E"/>
    <property type="match status" value="1"/>
</dbReference>
<dbReference type="PROSITE" id="PS50889">
    <property type="entry name" value="S4"/>
    <property type="match status" value="1"/>
</dbReference>